<reference key="1">
    <citation type="journal article" date="1998" name="Mol. Microbiol.">
        <title>PcrA is an essential DNA helicase of Bacillus subtilis fulfilling functions both in repair and rolling-circle replication.</title>
        <authorList>
            <person name="Petit M.-A."/>
            <person name="Dervyn E."/>
            <person name="Rose M."/>
            <person name="Entian K.-D."/>
            <person name="McGovern S."/>
            <person name="Ehrlich S.D."/>
            <person name="Bruand C."/>
        </authorList>
    </citation>
    <scope>NUCLEOTIDE SEQUENCE [GENOMIC DNA]</scope>
    <source>
        <strain>168</strain>
    </source>
</reference>
<reference key="2">
    <citation type="journal article" date="1997" name="Nature">
        <title>The complete genome sequence of the Gram-positive bacterium Bacillus subtilis.</title>
        <authorList>
            <person name="Kunst F."/>
            <person name="Ogasawara N."/>
            <person name="Moszer I."/>
            <person name="Albertini A.M."/>
            <person name="Alloni G."/>
            <person name="Azevedo V."/>
            <person name="Bertero M.G."/>
            <person name="Bessieres P."/>
            <person name="Bolotin A."/>
            <person name="Borchert S."/>
            <person name="Borriss R."/>
            <person name="Boursier L."/>
            <person name="Brans A."/>
            <person name="Braun M."/>
            <person name="Brignell S.C."/>
            <person name="Bron S."/>
            <person name="Brouillet S."/>
            <person name="Bruschi C.V."/>
            <person name="Caldwell B."/>
            <person name="Capuano V."/>
            <person name="Carter N.M."/>
            <person name="Choi S.-K."/>
            <person name="Codani J.-J."/>
            <person name="Connerton I.F."/>
            <person name="Cummings N.J."/>
            <person name="Daniel R.A."/>
            <person name="Denizot F."/>
            <person name="Devine K.M."/>
            <person name="Duesterhoeft A."/>
            <person name="Ehrlich S.D."/>
            <person name="Emmerson P.T."/>
            <person name="Entian K.-D."/>
            <person name="Errington J."/>
            <person name="Fabret C."/>
            <person name="Ferrari E."/>
            <person name="Foulger D."/>
            <person name="Fritz C."/>
            <person name="Fujita M."/>
            <person name="Fujita Y."/>
            <person name="Fuma S."/>
            <person name="Galizzi A."/>
            <person name="Galleron N."/>
            <person name="Ghim S.-Y."/>
            <person name="Glaser P."/>
            <person name="Goffeau A."/>
            <person name="Golightly E.J."/>
            <person name="Grandi G."/>
            <person name="Guiseppi G."/>
            <person name="Guy B.J."/>
            <person name="Haga K."/>
            <person name="Haiech J."/>
            <person name="Harwood C.R."/>
            <person name="Henaut A."/>
            <person name="Hilbert H."/>
            <person name="Holsappel S."/>
            <person name="Hosono S."/>
            <person name="Hullo M.-F."/>
            <person name="Itaya M."/>
            <person name="Jones L.-M."/>
            <person name="Joris B."/>
            <person name="Karamata D."/>
            <person name="Kasahara Y."/>
            <person name="Klaerr-Blanchard M."/>
            <person name="Klein C."/>
            <person name="Kobayashi Y."/>
            <person name="Koetter P."/>
            <person name="Koningstein G."/>
            <person name="Krogh S."/>
            <person name="Kumano M."/>
            <person name="Kurita K."/>
            <person name="Lapidus A."/>
            <person name="Lardinois S."/>
            <person name="Lauber J."/>
            <person name="Lazarevic V."/>
            <person name="Lee S.-M."/>
            <person name="Levine A."/>
            <person name="Liu H."/>
            <person name="Masuda S."/>
            <person name="Mauel C."/>
            <person name="Medigue C."/>
            <person name="Medina N."/>
            <person name="Mellado R.P."/>
            <person name="Mizuno M."/>
            <person name="Moestl D."/>
            <person name="Nakai S."/>
            <person name="Noback M."/>
            <person name="Noone D."/>
            <person name="O'Reilly M."/>
            <person name="Ogawa K."/>
            <person name="Ogiwara A."/>
            <person name="Oudega B."/>
            <person name="Park S.-H."/>
            <person name="Parro V."/>
            <person name="Pohl T.M."/>
            <person name="Portetelle D."/>
            <person name="Porwollik S."/>
            <person name="Prescott A.M."/>
            <person name="Presecan E."/>
            <person name="Pujic P."/>
            <person name="Purnelle B."/>
            <person name="Rapoport G."/>
            <person name="Rey M."/>
            <person name="Reynolds S."/>
            <person name="Rieger M."/>
            <person name="Rivolta C."/>
            <person name="Rocha E."/>
            <person name="Roche B."/>
            <person name="Rose M."/>
            <person name="Sadaie Y."/>
            <person name="Sato T."/>
            <person name="Scanlan E."/>
            <person name="Schleich S."/>
            <person name="Schroeter R."/>
            <person name="Scoffone F."/>
            <person name="Sekiguchi J."/>
            <person name="Sekowska A."/>
            <person name="Seror S.J."/>
            <person name="Serror P."/>
            <person name="Shin B.-S."/>
            <person name="Soldo B."/>
            <person name="Sorokin A."/>
            <person name="Tacconi E."/>
            <person name="Takagi T."/>
            <person name="Takahashi H."/>
            <person name="Takemaru K."/>
            <person name="Takeuchi M."/>
            <person name="Tamakoshi A."/>
            <person name="Tanaka T."/>
            <person name="Terpstra P."/>
            <person name="Tognoni A."/>
            <person name="Tosato V."/>
            <person name="Uchiyama S."/>
            <person name="Vandenbol M."/>
            <person name="Vannier F."/>
            <person name="Vassarotti A."/>
            <person name="Viari A."/>
            <person name="Wambutt R."/>
            <person name="Wedler E."/>
            <person name="Wedler H."/>
            <person name="Weitzenegger T."/>
            <person name="Winters P."/>
            <person name="Wipat A."/>
            <person name="Yamamoto H."/>
            <person name="Yamane K."/>
            <person name="Yasumoto K."/>
            <person name="Yata K."/>
            <person name="Yoshida K."/>
            <person name="Yoshikawa H.-F."/>
            <person name="Zumstein E."/>
            <person name="Yoshikawa H."/>
            <person name="Danchin A."/>
        </authorList>
    </citation>
    <scope>NUCLEOTIDE SEQUENCE [LARGE SCALE GENOMIC DNA]</scope>
    <source>
        <strain>168</strain>
    </source>
</reference>
<organism>
    <name type="scientific">Bacillus subtilis (strain 168)</name>
    <dbReference type="NCBI Taxonomy" id="224308"/>
    <lineage>
        <taxon>Bacteria</taxon>
        <taxon>Bacillati</taxon>
        <taxon>Bacillota</taxon>
        <taxon>Bacilli</taxon>
        <taxon>Bacillales</taxon>
        <taxon>Bacillaceae</taxon>
        <taxon>Bacillus</taxon>
    </lineage>
</organism>
<dbReference type="EC" id="6.5.1.2" evidence="1"/>
<dbReference type="EMBL" id="Y15254">
    <property type="status" value="NOT_ANNOTATED_CDS"/>
    <property type="molecule type" value="Genomic_DNA"/>
</dbReference>
<dbReference type="EMBL" id="AL009126">
    <property type="protein sequence ID" value="CAB12482.1"/>
    <property type="molecule type" value="Genomic_DNA"/>
</dbReference>
<dbReference type="PIR" id="F69794">
    <property type="entry name" value="F69794"/>
</dbReference>
<dbReference type="RefSeq" id="NP_388544.1">
    <property type="nucleotide sequence ID" value="NC_000964.3"/>
</dbReference>
<dbReference type="RefSeq" id="WP_003233916.1">
    <property type="nucleotide sequence ID" value="NZ_OZ025638.1"/>
</dbReference>
<dbReference type="SMR" id="O31498"/>
<dbReference type="FunCoup" id="O31498">
    <property type="interactions" value="423"/>
</dbReference>
<dbReference type="IntAct" id="O31498">
    <property type="interactions" value="2"/>
</dbReference>
<dbReference type="STRING" id="224308.BSU06620"/>
<dbReference type="PaxDb" id="224308-BSU06620"/>
<dbReference type="EnsemblBacteria" id="CAB12482">
    <property type="protein sequence ID" value="CAB12482"/>
    <property type="gene ID" value="BSU_06620"/>
</dbReference>
<dbReference type="GeneID" id="936056"/>
<dbReference type="KEGG" id="bsu:BSU06620"/>
<dbReference type="PATRIC" id="fig|224308.179.peg.720"/>
<dbReference type="eggNOG" id="COG0272">
    <property type="taxonomic scope" value="Bacteria"/>
</dbReference>
<dbReference type="InParanoid" id="O31498"/>
<dbReference type="OrthoDB" id="9759736at2"/>
<dbReference type="PhylomeDB" id="O31498"/>
<dbReference type="BioCyc" id="BSUB:BSU06620-MONOMER"/>
<dbReference type="Proteomes" id="UP000001570">
    <property type="component" value="Chromosome"/>
</dbReference>
<dbReference type="GO" id="GO:0005829">
    <property type="term" value="C:cytosol"/>
    <property type="evidence" value="ECO:0000318"/>
    <property type="project" value="GO_Central"/>
</dbReference>
<dbReference type="GO" id="GO:0003677">
    <property type="term" value="F:DNA binding"/>
    <property type="evidence" value="ECO:0007669"/>
    <property type="project" value="InterPro"/>
</dbReference>
<dbReference type="GO" id="GO:0003911">
    <property type="term" value="F:DNA ligase (NAD+) activity"/>
    <property type="evidence" value="ECO:0000318"/>
    <property type="project" value="GO_Central"/>
</dbReference>
<dbReference type="GO" id="GO:0046872">
    <property type="term" value="F:metal ion binding"/>
    <property type="evidence" value="ECO:0007669"/>
    <property type="project" value="UniProtKB-KW"/>
</dbReference>
<dbReference type="GO" id="GO:0006281">
    <property type="term" value="P:DNA repair"/>
    <property type="evidence" value="ECO:0007669"/>
    <property type="project" value="UniProtKB-KW"/>
</dbReference>
<dbReference type="GO" id="GO:0006260">
    <property type="term" value="P:DNA replication"/>
    <property type="evidence" value="ECO:0007669"/>
    <property type="project" value="UniProtKB-KW"/>
</dbReference>
<dbReference type="CDD" id="cd17748">
    <property type="entry name" value="BRCT_DNA_ligase_like"/>
    <property type="match status" value="1"/>
</dbReference>
<dbReference type="CDD" id="cd00114">
    <property type="entry name" value="LIGANc"/>
    <property type="match status" value="1"/>
</dbReference>
<dbReference type="FunFam" id="1.10.150.20:FF:000006">
    <property type="entry name" value="DNA ligase"/>
    <property type="match status" value="1"/>
</dbReference>
<dbReference type="FunFam" id="1.10.150.20:FF:000007">
    <property type="entry name" value="DNA ligase"/>
    <property type="match status" value="1"/>
</dbReference>
<dbReference type="FunFam" id="1.10.287.610:FF:000002">
    <property type="entry name" value="DNA ligase"/>
    <property type="match status" value="1"/>
</dbReference>
<dbReference type="FunFam" id="2.40.50.140:FF:000012">
    <property type="entry name" value="DNA ligase"/>
    <property type="match status" value="1"/>
</dbReference>
<dbReference type="FunFam" id="3.30.470.30:FF:000001">
    <property type="entry name" value="DNA ligase"/>
    <property type="match status" value="1"/>
</dbReference>
<dbReference type="FunFam" id="3.40.50.10190:FF:000026">
    <property type="entry name" value="DNA ligase"/>
    <property type="match status" value="1"/>
</dbReference>
<dbReference type="FunFam" id="6.20.10.30:FF:000002">
    <property type="entry name" value="DNA ligase"/>
    <property type="match status" value="1"/>
</dbReference>
<dbReference type="Gene3D" id="6.20.10.30">
    <property type="match status" value="1"/>
</dbReference>
<dbReference type="Gene3D" id="1.10.150.20">
    <property type="entry name" value="5' to 3' exonuclease, C-terminal subdomain"/>
    <property type="match status" value="2"/>
</dbReference>
<dbReference type="Gene3D" id="3.40.50.10190">
    <property type="entry name" value="BRCT domain"/>
    <property type="match status" value="1"/>
</dbReference>
<dbReference type="Gene3D" id="3.30.470.30">
    <property type="entry name" value="DNA ligase/mRNA capping enzyme"/>
    <property type="match status" value="1"/>
</dbReference>
<dbReference type="Gene3D" id="1.10.287.610">
    <property type="entry name" value="Helix hairpin bin"/>
    <property type="match status" value="1"/>
</dbReference>
<dbReference type="Gene3D" id="2.40.50.140">
    <property type="entry name" value="Nucleic acid-binding proteins"/>
    <property type="match status" value="1"/>
</dbReference>
<dbReference type="HAMAP" id="MF_01588">
    <property type="entry name" value="DNA_ligase_A"/>
    <property type="match status" value="1"/>
</dbReference>
<dbReference type="InterPro" id="IPR001357">
    <property type="entry name" value="BRCT_dom"/>
</dbReference>
<dbReference type="InterPro" id="IPR036420">
    <property type="entry name" value="BRCT_dom_sf"/>
</dbReference>
<dbReference type="InterPro" id="IPR041663">
    <property type="entry name" value="DisA/LigA_HHH"/>
</dbReference>
<dbReference type="InterPro" id="IPR001679">
    <property type="entry name" value="DNA_ligase"/>
</dbReference>
<dbReference type="InterPro" id="IPR018239">
    <property type="entry name" value="DNA_ligase_AS"/>
</dbReference>
<dbReference type="InterPro" id="IPR033136">
    <property type="entry name" value="DNA_ligase_CS"/>
</dbReference>
<dbReference type="InterPro" id="IPR013839">
    <property type="entry name" value="DNAligase_adenylation"/>
</dbReference>
<dbReference type="InterPro" id="IPR013840">
    <property type="entry name" value="DNAligase_N"/>
</dbReference>
<dbReference type="InterPro" id="IPR003583">
    <property type="entry name" value="Hlx-hairpin-Hlx_DNA-bd_motif"/>
</dbReference>
<dbReference type="InterPro" id="IPR012340">
    <property type="entry name" value="NA-bd_OB-fold"/>
</dbReference>
<dbReference type="InterPro" id="IPR004150">
    <property type="entry name" value="NAD_DNA_ligase_OB"/>
</dbReference>
<dbReference type="InterPro" id="IPR010994">
    <property type="entry name" value="RuvA_2-like"/>
</dbReference>
<dbReference type="InterPro" id="IPR004149">
    <property type="entry name" value="Znf_DNAligase_C4"/>
</dbReference>
<dbReference type="NCBIfam" id="TIGR00575">
    <property type="entry name" value="dnlj"/>
    <property type="match status" value="1"/>
</dbReference>
<dbReference type="NCBIfam" id="NF005932">
    <property type="entry name" value="PRK07956.1"/>
    <property type="match status" value="1"/>
</dbReference>
<dbReference type="PANTHER" id="PTHR23389">
    <property type="entry name" value="CHROMOSOME TRANSMISSION FIDELITY FACTOR 18"/>
    <property type="match status" value="1"/>
</dbReference>
<dbReference type="PANTHER" id="PTHR23389:SF9">
    <property type="entry name" value="DNA LIGASE"/>
    <property type="match status" value="1"/>
</dbReference>
<dbReference type="Pfam" id="PF00533">
    <property type="entry name" value="BRCT"/>
    <property type="match status" value="1"/>
</dbReference>
<dbReference type="Pfam" id="PF01653">
    <property type="entry name" value="DNA_ligase_aden"/>
    <property type="match status" value="1"/>
</dbReference>
<dbReference type="Pfam" id="PF03120">
    <property type="entry name" value="DNA_ligase_OB"/>
    <property type="match status" value="1"/>
</dbReference>
<dbReference type="Pfam" id="PF03119">
    <property type="entry name" value="DNA_ligase_ZBD"/>
    <property type="match status" value="1"/>
</dbReference>
<dbReference type="Pfam" id="PF12826">
    <property type="entry name" value="HHH_2"/>
    <property type="match status" value="1"/>
</dbReference>
<dbReference type="Pfam" id="PF14520">
    <property type="entry name" value="HHH_5"/>
    <property type="match status" value="1"/>
</dbReference>
<dbReference type="Pfam" id="PF22745">
    <property type="entry name" value="Nlig-Ia"/>
    <property type="match status" value="1"/>
</dbReference>
<dbReference type="PIRSF" id="PIRSF001604">
    <property type="entry name" value="LigA"/>
    <property type="match status" value="1"/>
</dbReference>
<dbReference type="SMART" id="SM00292">
    <property type="entry name" value="BRCT"/>
    <property type="match status" value="1"/>
</dbReference>
<dbReference type="SMART" id="SM00278">
    <property type="entry name" value="HhH1"/>
    <property type="match status" value="3"/>
</dbReference>
<dbReference type="SMART" id="SM00532">
    <property type="entry name" value="LIGANc"/>
    <property type="match status" value="1"/>
</dbReference>
<dbReference type="SUPFAM" id="SSF52113">
    <property type="entry name" value="BRCT domain"/>
    <property type="match status" value="1"/>
</dbReference>
<dbReference type="SUPFAM" id="SSF56091">
    <property type="entry name" value="DNA ligase/mRNA capping enzyme, catalytic domain"/>
    <property type="match status" value="1"/>
</dbReference>
<dbReference type="SUPFAM" id="SSF50249">
    <property type="entry name" value="Nucleic acid-binding proteins"/>
    <property type="match status" value="1"/>
</dbReference>
<dbReference type="SUPFAM" id="SSF47781">
    <property type="entry name" value="RuvA domain 2-like"/>
    <property type="match status" value="1"/>
</dbReference>
<dbReference type="PROSITE" id="PS50172">
    <property type="entry name" value="BRCT"/>
    <property type="match status" value="1"/>
</dbReference>
<dbReference type="PROSITE" id="PS01055">
    <property type="entry name" value="DNA_LIGASE_N1"/>
    <property type="match status" value="1"/>
</dbReference>
<dbReference type="PROSITE" id="PS01056">
    <property type="entry name" value="DNA_LIGASE_N2"/>
    <property type="match status" value="1"/>
</dbReference>
<sequence>MDKETAKQRAEELRRTINKYSYEYYTLDEPSVPDAEYDRLMQELIAIEEEHPDLRTPDSPTQRVGGAVLEAFQKVTHGTPMLSLGNAFNADDLRDFDRRVRQSVGDDVAYNVELKIDGLAVSLRYEDGYFVRGATRGDGTTGEDITENLKTIRNIPLKMNRELSIEVRGEAYMPKRSFEALNEERIKNEEEPFANPRNAAAGSLRQLDPKIAAKRNLDIFVYSIAELDEMGVETQSQGLDFLDELGFKTNQERKKCGSIEEVITLIDELQAKRADLPYEIDGIVIKVDSLDQQEELGFTAKSPRWAIAYKFPAEEVVTKLLDIELNVGRTGVITPTAILEPVKVAGTTVSRASLHNEDLIKEKDIRILDKVVVKKAGDIIPEVVNVLVDQRTGEEKEFSMPTECPECGSELVRIEGEVALRCINPECPAQIREGLIHFVSRNAMNIDGLGERVITQLFEENLVRNVADLYKLTKERVIQLERMGEKSTENLISSIQKSKENSLERLLFGLGIRFIGSKAAKTLAMHFESLENLKKASKEELLAVDEIGEKMADAVITYFHKEEMLELLNELQELGVNTLYKGPKKVKAEDSDSYFAGKTIVLTGKLEELSRNEAKAQIEALGGKLTGSVSKNTDLVIAGEAAGSKLTKAQELNIEVWNEEQLMGELKK</sequence>
<proteinExistence type="inferred from homology"/>
<name>DNLJ_BACSU</name>
<feature type="chain" id="PRO_0000161738" description="DNA ligase">
    <location>
        <begin position="1"/>
        <end position="668"/>
    </location>
</feature>
<feature type="domain" description="BRCT" evidence="1">
    <location>
        <begin position="590"/>
        <end position="668"/>
    </location>
</feature>
<feature type="active site" description="N6-AMP-lysine intermediate" evidence="1">
    <location>
        <position position="115"/>
    </location>
</feature>
<feature type="binding site" evidence="1">
    <location>
        <begin position="34"/>
        <end position="38"/>
    </location>
    <ligand>
        <name>NAD(+)</name>
        <dbReference type="ChEBI" id="CHEBI:57540"/>
    </ligand>
</feature>
<feature type="binding site" evidence="1">
    <location>
        <begin position="83"/>
        <end position="84"/>
    </location>
    <ligand>
        <name>NAD(+)</name>
        <dbReference type="ChEBI" id="CHEBI:57540"/>
    </ligand>
</feature>
<feature type="binding site" evidence="1">
    <location>
        <position position="113"/>
    </location>
    <ligand>
        <name>NAD(+)</name>
        <dbReference type="ChEBI" id="CHEBI:57540"/>
    </ligand>
</feature>
<feature type="binding site" evidence="1">
    <location>
        <position position="136"/>
    </location>
    <ligand>
        <name>NAD(+)</name>
        <dbReference type="ChEBI" id="CHEBI:57540"/>
    </ligand>
</feature>
<feature type="binding site" evidence="1">
    <location>
        <position position="170"/>
    </location>
    <ligand>
        <name>NAD(+)</name>
        <dbReference type="ChEBI" id="CHEBI:57540"/>
    </ligand>
</feature>
<feature type="binding site" evidence="1">
    <location>
        <position position="286"/>
    </location>
    <ligand>
        <name>NAD(+)</name>
        <dbReference type="ChEBI" id="CHEBI:57540"/>
    </ligand>
</feature>
<feature type="binding site" evidence="1">
    <location>
        <position position="310"/>
    </location>
    <ligand>
        <name>NAD(+)</name>
        <dbReference type="ChEBI" id="CHEBI:57540"/>
    </ligand>
</feature>
<feature type="binding site" evidence="1">
    <location>
        <position position="404"/>
    </location>
    <ligand>
        <name>Zn(2+)</name>
        <dbReference type="ChEBI" id="CHEBI:29105"/>
    </ligand>
</feature>
<feature type="binding site" evidence="1">
    <location>
        <position position="407"/>
    </location>
    <ligand>
        <name>Zn(2+)</name>
        <dbReference type="ChEBI" id="CHEBI:29105"/>
    </ligand>
</feature>
<feature type="binding site" evidence="1">
    <location>
        <position position="422"/>
    </location>
    <ligand>
        <name>Zn(2+)</name>
        <dbReference type="ChEBI" id="CHEBI:29105"/>
    </ligand>
</feature>
<feature type="binding site" evidence="1">
    <location>
        <position position="427"/>
    </location>
    <ligand>
        <name>Zn(2+)</name>
        <dbReference type="ChEBI" id="CHEBI:29105"/>
    </ligand>
</feature>
<evidence type="ECO:0000255" key="1">
    <source>
        <dbReference type="HAMAP-Rule" id="MF_01588"/>
    </source>
</evidence>
<gene>
    <name evidence="1" type="primary">ligA</name>
    <name type="synonym">lig</name>
    <name type="synonym">yerG</name>
    <name type="ordered locus">BSU06620</name>
</gene>
<accession>O31498</accession>
<keyword id="KW-0227">DNA damage</keyword>
<keyword id="KW-0234">DNA repair</keyword>
<keyword id="KW-0235">DNA replication</keyword>
<keyword id="KW-0436">Ligase</keyword>
<keyword id="KW-0460">Magnesium</keyword>
<keyword id="KW-0464">Manganese</keyword>
<keyword id="KW-0479">Metal-binding</keyword>
<keyword id="KW-0520">NAD</keyword>
<keyword id="KW-1185">Reference proteome</keyword>
<keyword id="KW-0862">Zinc</keyword>
<comment type="function">
    <text evidence="1">DNA ligase that catalyzes the formation of phosphodiester linkages between 5'-phosphoryl and 3'-hydroxyl groups in double-stranded DNA using NAD as a coenzyme and as the energy source for the reaction. It is essential for DNA replication and repair of damaged DNA.</text>
</comment>
<comment type="catalytic activity">
    <reaction evidence="1">
        <text>NAD(+) + (deoxyribonucleotide)n-3'-hydroxyl + 5'-phospho-(deoxyribonucleotide)m = (deoxyribonucleotide)n+m + AMP + beta-nicotinamide D-nucleotide.</text>
        <dbReference type="EC" id="6.5.1.2"/>
    </reaction>
</comment>
<comment type="cofactor">
    <cofactor evidence="1">
        <name>Mg(2+)</name>
        <dbReference type="ChEBI" id="CHEBI:18420"/>
    </cofactor>
    <cofactor evidence="1">
        <name>Mn(2+)</name>
        <dbReference type="ChEBI" id="CHEBI:29035"/>
    </cofactor>
</comment>
<comment type="similarity">
    <text evidence="1">Belongs to the NAD-dependent DNA ligase family. LigA subfamily.</text>
</comment>
<protein>
    <recommendedName>
        <fullName evidence="1">DNA ligase</fullName>
        <ecNumber evidence="1">6.5.1.2</ecNumber>
    </recommendedName>
    <alternativeName>
        <fullName evidence="1">Polydeoxyribonucleotide synthase [NAD(+)]</fullName>
    </alternativeName>
</protein>